<accession>O59272</accession>
<keyword id="KW-0002">3D-structure</keyword>
<keyword id="KW-0378">Hydrolase</keyword>
<keyword id="KW-0464">Manganese</keyword>
<keyword id="KW-0479">Metal-binding</keyword>
<keyword id="KW-0533">Nickel</keyword>
<name>D89S1_PYRHO</name>
<organism>
    <name type="scientific">Pyrococcus horikoshii (strain ATCC 700860 / DSM 12428 / JCM 9974 / NBRC 100139 / OT-3)</name>
    <dbReference type="NCBI Taxonomy" id="70601"/>
    <lineage>
        <taxon>Archaea</taxon>
        <taxon>Methanobacteriati</taxon>
        <taxon>Methanobacteriota</taxon>
        <taxon>Thermococci</taxon>
        <taxon>Thermococcales</taxon>
        <taxon>Thermococcaceae</taxon>
        <taxon>Pyrococcus</taxon>
    </lineage>
</organism>
<reference key="1">
    <citation type="journal article" date="1998" name="DNA Res.">
        <title>Complete sequence and gene organization of the genome of a hyper-thermophilic archaebacterium, Pyrococcus horikoshii OT3.</title>
        <authorList>
            <person name="Kawarabayasi Y."/>
            <person name="Sawada M."/>
            <person name="Horikawa H."/>
            <person name="Haikawa Y."/>
            <person name="Hino Y."/>
            <person name="Yamamoto S."/>
            <person name="Sekine M."/>
            <person name="Baba S."/>
            <person name="Kosugi H."/>
            <person name="Hosoyama A."/>
            <person name="Nagai Y."/>
            <person name="Sakai M."/>
            <person name="Ogura K."/>
            <person name="Otsuka R."/>
            <person name="Nakazawa H."/>
            <person name="Takamiya M."/>
            <person name="Ohfuku Y."/>
            <person name="Funahashi T."/>
            <person name="Tanaka T."/>
            <person name="Kudoh Y."/>
            <person name="Yamazaki J."/>
            <person name="Kushida N."/>
            <person name="Oguchi A."/>
            <person name="Aoki K."/>
            <person name="Yoshizawa T."/>
            <person name="Nakamura Y."/>
            <person name="Robb F.T."/>
            <person name="Horikoshi K."/>
            <person name="Masuchi Y."/>
            <person name="Shizuya H."/>
            <person name="Kikuchi H."/>
        </authorList>
    </citation>
    <scope>NUCLEOTIDE SEQUENCE [LARGE SCALE GENOMIC DNA]</scope>
    <source>
        <strain>ATCC 700860 / DSM 12428 / JCM 9974 / NBRC 100139 / OT-3</strain>
    </source>
</reference>
<reference key="2">
    <citation type="journal article" date="2016" name="Nat. Chem. Biol.">
        <title>A family of metal-dependent phosphatases implicated in metabolite damage-control.</title>
        <authorList>
            <person name="Huang L."/>
            <person name="Khusnutdinova A."/>
            <person name="Nocek B."/>
            <person name="Brown G."/>
            <person name="Xu X."/>
            <person name="Cui H."/>
            <person name="Petit P."/>
            <person name="Flick R."/>
            <person name="Zallot R."/>
            <person name="Balmant K."/>
            <person name="Ziemak M.J."/>
            <person name="Shanklin J."/>
            <person name="de Crecy-Lagard V."/>
            <person name="Fiehn O."/>
            <person name="Gregory J.F. III"/>
            <person name="Joachimiak A."/>
            <person name="Savchenko A."/>
            <person name="Yakunin A.F."/>
            <person name="Hanson A.D."/>
        </authorList>
    </citation>
    <scope>FUNCTION</scope>
    <scope>DOMAIN</scope>
    <scope>CATALYTIC ACTIVITY</scope>
    <scope>ACTIVITY REGULATION</scope>
    <scope>BIOPHYSICOCHEMICAL PROPERTIES</scope>
    <scope>COFACTOR</scope>
    <scope>MUTAGENESIS OF CYS-7; CYS-10; GLN-14; ASN-108; ASP-111; ASP-156; ASN-157; GLU-160; ASP-191; LYS-263 AND CYS-264</scope>
</reference>
<reference key="3">
    <citation type="submission" date="2006-03" db="PDB data bank">
        <title>Crystal structure of hypothetical protein (3258004) from Pyrococcus horikoshii at 2.04 A resolution.</title>
        <authorList>
            <consortium name="Joint Center for Structural Genomics (JCSG)"/>
        </authorList>
    </citation>
    <scope>X-RAY CRYSTALLOGRAPHY (2.04 ANGSTROMS)</scope>
</reference>
<proteinExistence type="evidence at protein level"/>
<feature type="chain" id="PRO_0000447506" description="Damage-control phosphatase PH1575">
    <location>
        <begin position="1"/>
        <end position="287"/>
    </location>
</feature>
<feature type="short sequence motif" description="Subfamily I CxxC motif" evidence="4">
    <location>
        <begin position="7"/>
        <end position="10"/>
    </location>
</feature>
<feature type="short sequence motif" description="Subfamily I GNFE motif" evidence="4">
    <location>
        <begin position="243"/>
        <end position="246"/>
    </location>
</feature>
<feature type="short sequence motif" description="Subfamily I KC motif" evidence="4">
    <location>
        <begin position="263"/>
        <end position="264"/>
    </location>
</feature>
<feature type="binding site" evidence="1">
    <location>
        <position position="156"/>
    </location>
    <ligand>
        <name>Mn(2+)</name>
        <dbReference type="ChEBI" id="CHEBI:29035"/>
        <note>catalytic</note>
    </ligand>
</feature>
<feature type="binding site" evidence="1">
    <location>
        <position position="157"/>
    </location>
    <ligand>
        <name>Mn(2+)</name>
        <dbReference type="ChEBI" id="CHEBI:29035"/>
        <note>catalytic</note>
    </ligand>
</feature>
<feature type="binding site" evidence="1">
    <location>
        <position position="191"/>
    </location>
    <ligand>
        <name>Mn(2+)</name>
        <dbReference type="ChEBI" id="CHEBI:29035"/>
        <note>catalytic</note>
    </ligand>
</feature>
<feature type="mutagenesis site" description="Does not affect catalytic activity, but abolishes absorption at 300-500 nm." evidence="1">
    <original>C</original>
    <variation>A</variation>
    <location>
        <position position="7"/>
    </location>
</feature>
<feature type="mutagenesis site" description="Does not affect catalytic activity, but abolishes absorption at 300-500 nm." evidence="1">
    <original>C</original>
    <variation>A</variation>
    <location>
        <position position="10"/>
    </location>
</feature>
<feature type="mutagenesis site" description="Does not affect catalytic activity." evidence="1">
    <original>Q</original>
    <variation>A</variation>
    <location>
        <position position="14"/>
    </location>
</feature>
<feature type="mutagenesis site" description="Abolishes catalytic activity." evidence="1">
    <original>N</original>
    <variation>A</variation>
    <location>
        <position position="108"/>
    </location>
</feature>
<feature type="mutagenesis site" description="Abolishes catalytic activity." evidence="1">
    <original>D</original>
    <variation>A</variation>
    <location>
        <position position="111"/>
    </location>
</feature>
<feature type="mutagenesis site" description="Abolishes catalytic activity." evidence="1">
    <original>D</original>
    <variation>A</variation>
    <location>
        <position position="156"/>
    </location>
</feature>
<feature type="mutagenesis site" description="Abolishes catalytic activity." evidence="1">
    <original>N</original>
    <variation>A</variation>
    <location>
        <position position="157"/>
    </location>
</feature>
<feature type="mutagenesis site" description="Strongly reduces catalytic activity." evidence="1">
    <original>E</original>
    <variation>A</variation>
    <location>
        <position position="160"/>
    </location>
</feature>
<feature type="mutagenesis site" description="Abolishes catalytic activity." evidence="1">
    <original>D</original>
    <variation>A</variation>
    <location>
        <position position="191"/>
    </location>
</feature>
<feature type="mutagenesis site" description="Abolishes catalytic activity." evidence="1">
    <original>K</original>
    <variation>A</variation>
    <location>
        <position position="263"/>
    </location>
</feature>
<feature type="mutagenesis site" description="Does not affect catalytic activity, but abolishes absorption at 300-500 nm." evidence="1">
    <original>C</original>
    <variation>A</variation>
    <location>
        <position position="264"/>
    </location>
</feature>
<feature type="helix" evidence="5">
    <location>
        <begin position="7"/>
        <end position="22"/>
    </location>
</feature>
<feature type="helix" evidence="5">
    <location>
        <begin position="26"/>
        <end position="43"/>
    </location>
</feature>
<feature type="helix" evidence="5">
    <location>
        <begin position="50"/>
        <end position="65"/>
    </location>
</feature>
<feature type="helix" evidence="5">
    <location>
        <begin position="72"/>
        <end position="92"/>
    </location>
</feature>
<feature type="helix" evidence="5">
    <location>
        <begin position="97"/>
        <end position="109"/>
    </location>
</feature>
<feature type="helix" evidence="5">
    <location>
        <begin position="118"/>
        <end position="129"/>
    </location>
</feature>
<feature type="strand" evidence="5">
    <location>
        <begin position="134"/>
        <end position="136"/>
    </location>
</feature>
<feature type="helix" evidence="5">
    <location>
        <begin position="138"/>
        <end position="147"/>
    </location>
</feature>
<feature type="strand" evidence="5">
    <location>
        <begin position="149"/>
        <end position="154"/>
    </location>
</feature>
<feature type="helix" evidence="5">
    <location>
        <begin position="160"/>
        <end position="174"/>
    </location>
</feature>
<feature type="strand" evidence="5">
    <location>
        <begin position="178"/>
        <end position="186"/>
    </location>
</feature>
<feature type="helix" evidence="5">
    <location>
        <begin position="194"/>
        <end position="199"/>
    </location>
</feature>
<feature type="helix" evidence="5">
    <location>
        <begin position="202"/>
        <end position="204"/>
    </location>
</feature>
<feature type="strand" evidence="5">
    <location>
        <begin position="206"/>
        <end position="210"/>
    </location>
</feature>
<feature type="strand" evidence="5">
    <location>
        <begin position="212"/>
        <end position="217"/>
    </location>
</feature>
<feature type="turn" evidence="5">
    <location>
        <begin position="220"/>
        <end position="222"/>
    </location>
</feature>
<feature type="helix" evidence="5">
    <location>
        <begin position="225"/>
        <end position="233"/>
    </location>
</feature>
<feature type="strand" evidence="5">
    <location>
        <begin position="235"/>
        <end position="240"/>
    </location>
</feature>
<feature type="helix" evidence="5">
    <location>
        <begin position="241"/>
        <end position="248"/>
    </location>
</feature>
<feature type="strand" evidence="5">
    <location>
        <begin position="256"/>
        <end position="261"/>
    </location>
</feature>
<feature type="helix" evidence="5">
    <location>
        <begin position="265"/>
        <end position="271"/>
    </location>
</feature>
<feature type="strand" evidence="5">
    <location>
        <begin position="278"/>
        <end position="282"/>
    </location>
</feature>
<dbReference type="EC" id="3.1.3.-" evidence="1"/>
<dbReference type="EMBL" id="BA000001">
    <property type="protein sequence ID" value="BAA30687.1"/>
    <property type="molecule type" value="Genomic_DNA"/>
</dbReference>
<dbReference type="PIR" id="G71035">
    <property type="entry name" value="G71035"/>
</dbReference>
<dbReference type="RefSeq" id="WP_010885650.1">
    <property type="nucleotide sequence ID" value="NC_000961.1"/>
</dbReference>
<dbReference type="PDB" id="2G8L">
    <property type="method" value="X-ray"/>
    <property type="resolution" value="2.04 A"/>
    <property type="chains" value="A/B=1-287"/>
</dbReference>
<dbReference type="PDBsum" id="2G8L"/>
<dbReference type="SMR" id="O59272"/>
<dbReference type="STRING" id="70601.gene:9378565"/>
<dbReference type="DNASU" id="1443890"/>
<dbReference type="EnsemblBacteria" id="BAA30687">
    <property type="protein sequence ID" value="BAA30687"/>
    <property type="gene ID" value="BAA30687"/>
</dbReference>
<dbReference type="GeneID" id="1443890"/>
<dbReference type="KEGG" id="pho:PH1575"/>
<dbReference type="eggNOG" id="arCOG04410">
    <property type="taxonomic scope" value="Archaea"/>
</dbReference>
<dbReference type="OrthoDB" id="359165at2157"/>
<dbReference type="EvolutionaryTrace" id="O59272"/>
<dbReference type="Proteomes" id="UP000000752">
    <property type="component" value="Chromosome"/>
</dbReference>
<dbReference type="GO" id="GO:0016787">
    <property type="term" value="F:hydrolase activity"/>
    <property type="evidence" value="ECO:0007669"/>
    <property type="project" value="UniProtKB-KW"/>
</dbReference>
<dbReference type="GO" id="GO:0046872">
    <property type="term" value="F:metal ion binding"/>
    <property type="evidence" value="ECO:0007669"/>
    <property type="project" value="UniProtKB-KW"/>
</dbReference>
<dbReference type="Gene3D" id="1.10.8.380">
    <property type="entry name" value="Uncharacterised protein PF01937, DUF89, domain 1"/>
    <property type="match status" value="1"/>
</dbReference>
<dbReference type="Gene3D" id="1.10.285.20">
    <property type="entry name" value="Uncharacterised protein PF01937, DUF89, domain 2"/>
    <property type="match status" value="1"/>
</dbReference>
<dbReference type="Gene3D" id="3.40.50.10880">
    <property type="entry name" value="Uncharacterised protein PF01937, DUF89, domain 3"/>
    <property type="match status" value="1"/>
</dbReference>
<dbReference type="InterPro" id="IPR036075">
    <property type="entry name" value="ARMT-1-like_metal-bd_sf"/>
</dbReference>
<dbReference type="InterPro" id="IPR002791">
    <property type="entry name" value="ARMT1-like_metal-bd"/>
</dbReference>
<dbReference type="InterPro" id="IPR053636">
    <property type="entry name" value="DCN_phosphatase_I"/>
</dbReference>
<dbReference type="InterPro" id="IPR014444">
    <property type="entry name" value="PH1575-like"/>
</dbReference>
<dbReference type="NCBIfam" id="NF040824">
    <property type="entry name" value="damage_ctl_Phtase"/>
    <property type="match status" value="1"/>
</dbReference>
<dbReference type="Pfam" id="PF01937">
    <property type="entry name" value="ARMT1-like_dom"/>
    <property type="match status" value="1"/>
</dbReference>
<dbReference type="PIRSF" id="PIRSF006593">
    <property type="entry name" value="UCP006593"/>
    <property type="match status" value="1"/>
</dbReference>
<dbReference type="SUPFAM" id="SSF111321">
    <property type="entry name" value="AF1104-like"/>
    <property type="match status" value="1"/>
</dbReference>
<evidence type="ECO:0000269" key="1">
    <source>
    </source>
</evidence>
<evidence type="ECO:0000303" key="2">
    <source>
    </source>
</evidence>
<evidence type="ECO:0000305" key="3"/>
<evidence type="ECO:0000305" key="4">
    <source>
    </source>
</evidence>
<evidence type="ECO:0007829" key="5">
    <source>
        <dbReference type="PDB" id="2G8L"/>
    </source>
</evidence>
<gene>
    <name type="ordered locus">PH1575</name>
</gene>
<protein>
    <recommendedName>
        <fullName evidence="2">Damage-control phosphatase PH1575</fullName>
        <ecNumber evidence="1">3.1.3.-</ecNumber>
    </recommendedName>
    <alternativeName>
        <fullName evidence="2">Nucleotides phosphatase PH1575</fullName>
    </alternativeName>
</protein>
<sequence length="287" mass="32555">MKVQYECLTCMANQCQRIVEMATQDMDIRRRAMILAAKLLAKEYNENAIPAIAGSLIFLELYKFLGNDDPFIEYKLKSEEMARKVADIIKRKLKLDFELAVKLAIIGNVIDFSVGFSPEDLEEEVEKMLKDKLYIDDSKELFEEVKRAENILYITDNVGEHYFDAILIEKIREISNAEVYIAGKEGPIINDATVEDLKRAGLEKLGKVISTGTRIVGVPLKLVSREFMEAFNKADVIIAKGQGNFETLSEINDSRIFFLLKAKCPAVARELKVPKGALVCMRNKFKL</sequence>
<comment type="function">
    <text evidence="1">Metal-dependent phosphatase with probable damage-control functions (PubMed:27322068). Shows phosphatase activity against p-nitrophenyl phosphate (pNPP), but natural substrates have not been identified yet (PubMed:27322068). Low phosphatase activity against 8-oxo nucleotides suggests that it could hydrolyze oxidatively damaged purine nucleotides or their biosynthetic intermediates (PubMed:27322068).</text>
</comment>
<comment type="cofactor">
    <cofactor evidence="1">
        <name>Mn(2+)</name>
        <dbReference type="ChEBI" id="CHEBI:29035"/>
    </cofactor>
    <cofactor evidence="1">
        <name>Ni(2+)</name>
        <dbReference type="ChEBI" id="CHEBI:49786"/>
    </cofactor>
    <text evidence="1">Phosphatase activity is strongly promoted by several divalent cation ions but it is suggested that Mn(2+) and possibly Ni(2+) represent biologically relevant metal ion cofactors for damage-control phosphatase activity (PubMed:27322068).</text>
</comment>
<comment type="cofactor">
    <cofactor evidence="1">
        <name>[2Fe-2S] cluster</name>
        <dbReference type="ChEBI" id="CHEBI:190135"/>
    </cofactor>
    <text evidence="1">The [2Fe-2S] cluster does not seem to be directly involved in catalysis (PubMed:27322068).</text>
</comment>
<comment type="activity regulation">
    <text evidence="1">Activity is strongly promoted by Co(2+), Ni(2+), Mg(2+), Mn(2+), Ca(2+), Zn(2+) and Cu(2+) (PubMed:27322068). Activity is inhibited by EDTA (PubMed:27322068).</text>
</comment>
<comment type="biophysicochemical properties">
    <kinetics>
        <KM evidence="1">110 uM for p-nitrophenylphosphate</KM>
        <KM evidence="1">600 uM for 8-oxo-2'-deoxyguanosine-5'-triphosphate</KM>
        <KM evidence="1">420 uM for adenosine-5'-diphosphate</KM>
        <KM evidence="1">1.9 uM for Zn(2+)</KM>
        <KM evidence="1">4.6 uM for Ni(2+)</KM>
        <text evidence="1">kcat is 1.00 sec(-1) with p-nitrophenylphosphate as substrate. kcat is 0.20 sec(-1) with adenosine-5'-diphosphate as substrate. kcat is 0.12 sec(-1) with 8-oxo-2'-deoxyguanosine-5'-triphosphatee as substrate.</text>
    </kinetics>
</comment>
<comment type="domain">
    <text evidence="4">Subfamily I proteins are distinguished by three conserved motifs: the CxxC motif localized near the N-terminus, the GNFE motif localized about 40 residues from the C-terminus, and the KC motif localized about 25 residues from the C-terminus (Probable). In the crystal structures of the subfamily I proteins, the side chains of the cysteines in the CxxC and KC motifs face each other across the rim of the putative substrate-binding cleft, and the GNFE motif lies deep in the cleft close to the metal-binding aspartate and asparagine (Probable). the 3 conserved cysteines in motifs CxxC and KC play a key role in the interaction with the Fe-containing chromophore, which is not directly involved in catalysis (Probable).</text>
</comment>
<comment type="similarity">
    <text evidence="3">Belongs to the damage-control phosphatase family. Nucleotides phosphatase I subfamily.</text>
</comment>